<keyword id="KW-0597">Phosphoprotein</keyword>
<keyword id="KW-1185">Reference proteome</keyword>
<keyword id="KW-0346">Stress response</keyword>
<name>HSP27_DROME</name>
<gene>
    <name type="primary">Hsp27</name>
    <name type="ORF">CG4466</name>
</gene>
<dbReference type="EMBL" id="J01101">
    <property type="protein sequence ID" value="AAA28638.1"/>
    <property type="molecule type" value="Genomic_DNA"/>
</dbReference>
<dbReference type="EMBL" id="X03891">
    <property type="protein sequence ID" value="CAA27527.1"/>
    <property type="molecule type" value="Genomic_DNA"/>
</dbReference>
<dbReference type="EMBL" id="AE014296">
    <property type="protein sequence ID" value="AAF50285.1"/>
    <property type="molecule type" value="Genomic_DNA"/>
</dbReference>
<dbReference type="EMBL" id="AY118471">
    <property type="protein sequence ID" value="AAM49840.1"/>
    <property type="molecule type" value="mRNA"/>
</dbReference>
<dbReference type="PIR" id="A02921">
    <property type="entry name" value="HHFF27"/>
</dbReference>
<dbReference type="PIR" id="D20647">
    <property type="entry name" value="D20647"/>
</dbReference>
<dbReference type="RefSeq" id="NP_001287001.1">
    <property type="nucleotide sequence ID" value="NM_001300072.1"/>
</dbReference>
<dbReference type="RefSeq" id="NP_524000.1">
    <property type="nucleotide sequence ID" value="NM_079276.4"/>
</dbReference>
<dbReference type="SMR" id="P02518"/>
<dbReference type="BioGRID" id="64473">
    <property type="interactions" value="43"/>
</dbReference>
<dbReference type="DIP" id="DIP-18749N"/>
<dbReference type="FunCoup" id="P02518">
    <property type="interactions" value="10"/>
</dbReference>
<dbReference type="IntAct" id="P02518">
    <property type="interactions" value="32"/>
</dbReference>
<dbReference type="MINT" id="P02518"/>
<dbReference type="STRING" id="7227.FBpp0312159"/>
<dbReference type="iPTMnet" id="P02518"/>
<dbReference type="PaxDb" id="7227-FBpp0076182"/>
<dbReference type="DNASU" id="39078"/>
<dbReference type="EnsemblMetazoa" id="FBtr0076454">
    <property type="protein sequence ID" value="FBpp0076182"/>
    <property type="gene ID" value="FBgn0001226"/>
</dbReference>
<dbReference type="EnsemblMetazoa" id="FBtr0346541">
    <property type="protein sequence ID" value="FBpp0312159"/>
    <property type="gene ID" value="FBgn0001226"/>
</dbReference>
<dbReference type="GeneID" id="39078"/>
<dbReference type="KEGG" id="dme:Dmel_CG4466"/>
<dbReference type="AGR" id="FB:FBgn0289994"/>
<dbReference type="CTD" id="39078"/>
<dbReference type="FlyBase" id="FBgn0289994">
    <property type="gene designation" value="Hsp27"/>
</dbReference>
<dbReference type="VEuPathDB" id="VectorBase:FBgn0001226"/>
<dbReference type="eggNOG" id="KOG3591">
    <property type="taxonomic scope" value="Eukaryota"/>
</dbReference>
<dbReference type="HOGENOM" id="CLU_095001_1_0_1"/>
<dbReference type="InParanoid" id="P02518"/>
<dbReference type="OMA" id="AYNDWDH"/>
<dbReference type="OrthoDB" id="1431247at2759"/>
<dbReference type="PhylomeDB" id="P02518"/>
<dbReference type="Reactome" id="R-DME-4420097">
    <property type="pathway name" value="VEGFA-VEGFR2 Pathway"/>
</dbReference>
<dbReference type="Reactome" id="R-DME-9009391">
    <property type="pathway name" value="Extra-nuclear estrogen signaling"/>
</dbReference>
<dbReference type="SignaLink" id="P02518"/>
<dbReference type="BioGRID-ORCS" id="39078">
    <property type="hits" value="0 hits in 3 CRISPR screens"/>
</dbReference>
<dbReference type="ChiTaRS" id="Hsp27">
    <property type="organism name" value="fly"/>
</dbReference>
<dbReference type="GenomeRNAi" id="39078"/>
<dbReference type="PRO" id="PR:P02518"/>
<dbReference type="Proteomes" id="UP000000803">
    <property type="component" value="Chromosome 3L"/>
</dbReference>
<dbReference type="Bgee" id="FBgn0001226">
    <property type="expression patterns" value="Expressed in enterocyte of anterior adult midgut epithelium in digestive tract and 285 other cell types or tissues"/>
</dbReference>
<dbReference type="ExpressionAtlas" id="P02518">
    <property type="expression patterns" value="baseline and differential"/>
</dbReference>
<dbReference type="GO" id="GO:0005737">
    <property type="term" value="C:cytoplasm"/>
    <property type="evidence" value="ECO:0007005"/>
    <property type="project" value="FlyBase"/>
</dbReference>
<dbReference type="GO" id="GO:0034663">
    <property type="term" value="C:endoplasmic reticulum chaperone complex"/>
    <property type="evidence" value="ECO:0000353"/>
    <property type="project" value="FlyBase"/>
</dbReference>
<dbReference type="GO" id="GO:0005634">
    <property type="term" value="C:nucleus"/>
    <property type="evidence" value="ECO:0007005"/>
    <property type="project" value="FlyBase"/>
</dbReference>
<dbReference type="GO" id="GO:0051082">
    <property type="term" value="F:unfolded protein binding"/>
    <property type="evidence" value="ECO:0000314"/>
    <property type="project" value="FlyBase"/>
</dbReference>
<dbReference type="GO" id="GO:0042595">
    <property type="term" value="P:behavioral response to starvation"/>
    <property type="evidence" value="ECO:0000315"/>
    <property type="project" value="FlyBase"/>
</dbReference>
<dbReference type="GO" id="GO:0061077">
    <property type="term" value="P:chaperone-mediated protein folding"/>
    <property type="evidence" value="ECO:0000314"/>
    <property type="project" value="FlyBase"/>
</dbReference>
<dbReference type="GO" id="GO:0042742">
    <property type="term" value="P:defense response to bacterium"/>
    <property type="evidence" value="ECO:0000315"/>
    <property type="project" value="FlyBase"/>
</dbReference>
<dbReference type="GO" id="GO:0050832">
    <property type="term" value="P:defense response to fungus"/>
    <property type="evidence" value="ECO:0000315"/>
    <property type="project" value="FlyBase"/>
</dbReference>
<dbReference type="GO" id="GO:0008340">
    <property type="term" value="P:determination of adult lifespan"/>
    <property type="evidence" value="ECO:0000315"/>
    <property type="project" value="FlyBase"/>
</dbReference>
<dbReference type="GO" id="GO:0042026">
    <property type="term" value="P:protein refolding"/>
    <property type="evidence" value="ECO:0000314"/>
    <property type="project" value="FlyBase"/>
</dbReference>
<dbReference type="GO" id="GO:0009408">
    <property type="term" value="P:response to heat"/>
    <property type="evidence" value="ECO:0000314"/>
    <property type="project" value="FlyBase"/>
</dbReference>
<dbReference type="CDD" id="cd06526">
    <property type="entry name" value="metazoan_ACD"/>
    <property type="match status" value="1"/>
</dbReference>
<dbReference type="FunFam" id="2.60.40.790:FF:000042">
    <property type="entry name" value="heat shock protein 27"/>
    <property type="match status" value="1"/>
</dbReference>
<dbReference type="Gene3D" id="2.60.40.790">
    <property type="match status" value="1"/>
</dbReference>
<dbReference type="InterPro" id="IPR002068">
    <property type="entry name" value="A-crystallin/Hsp20_dom"/>
</dbReference>
<dbReference type="InterPro" id="IPR001436">
    <property type="entry name" value="Alpha-crystallin/sHSP_animal"/>
</dbReference>
<dbReference type="InterPro" id="IPR008978">
    <property type="entry name" value="HSP20-like_chaperone"/>
</dbReference>
<dbReference type="PANTHER" id="PTHR45640:SF13">
    <property type="entry name" value="HEAT SHOCK PROTEIN 22-RELATED"/>
    <property type="match status" value="1"/>
</dbReference>
<dbReference type="PANTHER" id="PTHR45640">
    <property type="entry name" value="HEAT SHOCK PROTEIN HSP-12.2-RELATED"/>
    <property type="match status" value="1"/>
</dbReference>
<dbReference type="Pfam" id="PF00011">
    <property type="entry name" value="HSP20"/>
    <property type="match status" value="1"/>
</dbReference>
<dbReference type="PRINTS" id="PR00299">
    <property type="entry name" value="ACRYSTALLIN"/>
</dbReference>
<dbReference type="SUPFAM" id="SSF49764">
    <property type="entry name" value="HSP20-like chaperones"/>
    <property type="match status" value="1"/>
</dbReference>
<dbReference type="PROSITE" id="PS01031">
    <property type="entry name" value="SHSP"/>
    <property type="match status" value="1"/>
</dbReference>
<feature type="chain" id="PRO_0000125966" description="Heat shock protein 27">
    <location>
        <begin position="1"/>
        <end position="213"/>
    </location>
</feature>
<feature type="domain" description="sHSP" evidence="1">
    <location>
        <begin position="71"/>
        <end position="182"/>
    </location>
</feature>
<feature type="region of interest" description="Disordered" evidence="2">
    <location>
        <begin position="157"/>
        <end position="213"/>
    </location>
</feature>
<feature type="compositionally biased region" description="Basic and acidic residues" evidence="2">
    <location>
        <begin position="197"/>
        <end position="213"/>
    </location>
</feature>
<feature type="modified residue" description="Phosphoserine" evidence="4">
    <location>
        <position position="58"/>
    </location>
</feature>
<feature type="modified residue" description="Phosphoserine" evidence="3">
    <location>
        <position position="75"/>
    </location>
</feature>
<feature type="sequence conflict" description="In Ref. 2." evidence="5" ref="2">
    <original>H</original>
    <variation>N</variation>
    <location>
        <position position="40"/>
    </location>
</feature>
<feature type="sequence conflict" description="In Ref. 2." evidence="5" ref="2">
    <original>H</original>
    <variation>P</variation>
    <location>
        <position position="66"/>
    </location>
</feature>
<feature type="sequence conflict" description="In Ref. 2." evidence="5" ref="2">
    <original>M</original>
    <variation>I</variation>
    <location>
        <position position="94"/>
    </location>
</feature>
<feature type="sequence conflict" description="In Ref. 2." evidence="5" ref="2">
    <original>FDPNE</original>
    <variation>LTPTK</variation>
    <location>
        <begin position="143"/>
        <end position="147"/>
    </location>
</feature>
<feature type="sequence conflict" description="In Ref. 2." evidence="5" ref="2">
    <original>K</original>
    <variation>R</variation>
    <location>
        <position position="161"/>
    </location>
</feature>
<feature type="sequence conflict" description="In Ref. 2." evidence="5" ref="2">
    <original>SKEQ</original>
    <variation>GRER</variation>
    <location>
        <begin position="167"/>
        <end position="170"/>
    </location>
</feature>
<feature type="sequence conflict" description="In Ref. 2." evidence="5" ref="2">
    <original>Q</original>
    <variation>R</variation>
    <location>
        <position position="178"/>
    </location>
</feature>
<proteinExistence type="evidence at protein level"/>
<reference key="1">
    <citation type="journal article" date="1983" name="J. Mol. Biol.">
        <title>Nucleotide sequence analysis of the Drosophila small heat shock gene cluster at locus 67B.</title>
        <authorList>
            <person name="Southgate R."/>
            <person name="Ayme A."/>
            <person name="Voellmy R."/>
        </authorList>
    </citation>
    <scope>NUCLEOTIDE SEQUENCE [GENOMIC DNA]</scope>
</reference>
<reference key="2">
    <citation type="journal article" date="1982" name="Proc. Natl. Acad. Sci. U.S.A.">
        <title>Four small Drosophila heat shock proteins are related to each other and to mammalian alpha-crystallin.</title>
        <authorList>
            <person name="Ingolia T.D."/>
            <person name="Craig E.A."/>
        </authorList>
    </citation>
    <scope>NUCLEOTIDE SEQUENCE [GENOMIC DNA]</scope>
</reference>
<reference key="3">
    <citation type="journal article" date="2000" name="Science">
        <title>The genome sequence of Drosophila melanogaster.</title>
        <authorList>
            <person name="Adams M.D."/>
            <person name="Celniker S.E."/>
            <person name="Holt R.A."/>
            <person name="Evans C.A."/>
            <person name="Gocayne J.D."/>
            <person name="Amanatides P.G."/>
            <person name="Scherer S.E."/>
            <person name="Li P.W."/>
            <person name="Hoskins R.A."/>
            <person name="Galle R.F."/>
            <person name="George R.A."/>
            <person name="Lewis S.E."/>
            <person name="Richards S."/>
            <person name="Ashburner M."/>
            <person name="Henderson S.N."/>
            <person name="Sutton G.G."/>
            <person name="Wortman J.R."/>
            <person name="Yandell M.D."/>
            <person name="Zhang Q."/>
            <person name="Chen L.X."/>
            <person name="Brandon R.C."/>
            <person name="Rogers Y.-H.C."/>
            <person name="Blazej R.G."/>
            <person name="Champe M."/>
            <person name="Pfeiffer B.D."/>
            <person name="Wan K.H."/>
            <person name="Doyle C."/>
            <person name="Baxter E.G."/>
            <person name="Helt G."/>
            <person name="Nelson C.R."/>
            <person name="Miklos G.L.G."/>
            <person name="Abril J.F."/>
            <person name="Agbayani A."/>
            <person name="An H.-J."/>
            <person name="Andrews-Pfannkoch C."/>
            <person name="Baldwin D."/>
            <person name="Ballew R.M."/>
            <person name="Basu A."/>
            <person name="Baxendale J."/>
            <person name="Bayraktaroglu L."/>
            <person name="Beasley E.M."/>
            <person name="Beeson K.Y."/>
            <person name="Benos P.V."/>
            <person name="Berman B.P."/>
            <person name="Bhandari D."/>
            <person name="Bolshakov S."/>
            <person name="Borkova D."/>
            <person name="Botchan M.R."/>
            <person name="Bouck J."/>
            <person name="Brokstein P."/>
            <person name="Brottier P."/>
            <person name="Burtis K.C."/>
            <person name="Busam D.A."/>
            <person name="Butler H."/>
            <person name="Cadieu E."/>
            <person name="Center A."/>
            <person name="Chandra I."/>
            <person name="Cherry J.M."/>
            <person name="Cawley S."/>
            <person name="Dahlke C."/>
            <person name="Davenport L.B."/>
            <person name="Davies P."/>
            <person name="de Pablos B."/>
            <person name="Delcher A."/>
            <person name="Deng Z."/>
            <person name="Mays A.D."/>
            <person name="Dew I."/>
            <person name="Dietz S.M."/>
            <person name="Dodson K."/>
            <person name="Doup L.E."/>
            <person name="Downes M."/>
            <person name="Dugan-Rocha S."/>
            <person name="Dunkov B.C."/>
            <person name="Dunn P."/>
            <person name="Durbin K.J."/>
            <person name="Evangelista C.C."/>
            <person name="Ferraz C."/>
            <person name="Ferriera S."/>
            <person name="Fleischmann W."/>
            <person name="Fosler C."/>
            <person name="Gabrielian A.E."/>
            <person name="Garg N.S."/>
            <person name="Gelbart W.M."/>
            <person name="Glasser K."/>
            <person name="Glodek A."/>
            <person name="Gong F."/>
            <person name="Gorrell J.H."/>
            <person name="Gu Z."/>
            <person name="Guan P."/>
            <person name="Harris M."/>
            <person name="Harris N.L."/>
            <person name="Harvey D.A."/>
            <person name="Heiman T.J."/>
            <person name="Hernandez J.R."/>
            <person name="Houck J."/>
            <person name="Hostin D."/>
            <person name="Houston K.A."/>
            <person name="Howland T.J."/>
            <person name="Wei M.-H."/>
            <person name="Ibegwam C."/>
            <person name="Jalali M."/>
            <person name="Kalush F."/>
            <person name="Karpen G.H."/>
            <person name="Ke Z."/>
            <person name="Kennison J.A."/>
            <person name="Ketchum K.A."/>
            <person name="Kimmel B.E."/>
            <person name="Kodira C.D."/>
            <person name="Kraft C.L."/>
            <person name="Kravitz S."/>
            <person name="Kulp D."/>
            <person name="Lai Z."/>
            <person name="Lasko P."/>
            <person name="Lei Y."/>
            <person name="Levitsky A.A."/>
            <person name="Li J.H."/>
            <person name="Li Z."/>
            <person name="Liang Y."/>
            <person name="Lin X."/>
            <person name="Liu X."/>
            <person name="Mattei B."/>
            <person name="McIntosh T.C."/>
            <person name="McLeod M.P."/>
            <person name="McPherson D."/>
            <person name="Merkulov G."/>
            <person name="Milshina N.V."/>
            <person name="Mobarry C."/>
            <person name="Morris J."/>
            <person name="Moshrefi A."/>
            <person name="Mount S.M."/>
            <person name="Moy M."/>
            <person name="Murphy B."/>
            <person name="Murphy L."/>
            <person name="Muzny D.M."/>
            <person name="Nelson D.L."/>
            <person name="Nelson D.R."/>
            <person name="Nelson K.A."/>
            <person name="Nixon K."/>
            <person name="Nusskern D.R."/>
            <person name="Pacleb J.M."/>
            <person name="Palazzolo M."/>
            <person name="Pittman G.S."/>
            <person name="Pan S."/>
            <person name="Pollard J."/>
            <person name="Puri V."/>
            <person name="Reese M.G."/>
            <person name="Reinert K."/>
            <person name="Remington K."/>
            <person name="Saunders R.D.C."/>
            <person name="Scheeler F."/>
            <person name="Shen H."/>
            <person name="Shue B.C."/>
            <person name="Siden-Kiamos I."/>
            <person name="Simpson M."/>
            <person name="Skupski M.P."/>
            <person name="Smith T.J."/>
            <person name="Spier E."/>
            <person name="Spradling A.C."/>
            <person name="Stapleton M."/>
            <person name="Strong R."/>
            <person name="Sun E."/>
            <person name="Svirskas R."/>
            <person name="Tector C."/>
            <person name="Turner R."/>
            <person name="Venter E."/>
            <person name="Wang A.H."/>
            <person name="Wang X."/>
            <person name="Wang Z.-Y."/>
            <person name="Wassarman D.A."/>
            <person name="Weinstock G.M."/>
            <person name="Weissenbach J."/>
            <person name="Williams S.M."/>
            <person name="Woodage T."/>
            <person name="Worley K.C."/>
            <person name="Wu D."/>
            <person name="Yang S."/>
            <person name="Yao Q.A."/>
            <person name="Ye J."/>
            <person name="Yeh R.-F."/>
            <person name="Zaveri J.S."/>
            <person name="Zhan M."/>
            <person name="Zhang G."/>
            <person name="Zhao Q."/>
            <person name="Zheng L."/>
            <person name="Zheng X.H."/>
            <person name="Zhong F.N."/>
            <person name="Zhong W."/>
            <person name="Zhou X."/>
            <person name="Zhu S.C."/>
            <person name="Zhu X."/>
            <person name="Smith H.O."/>
            <person name="Gibbs R.A."/>
            <person name="Myers E.W."/>
            <person name="Rubin G.M."/>
            <person name="Venter J.C."/>
        </authorList>
    </citation>
    <scope>NUCLEOTIDE SEQUENCE [LARGE SCALE GENOMIC DNA]</scope>
    <source>
        <strain>Berkeley</strain>
    </source>
</reference>
<reference key="4">
    <citation type="journal article" date="2002" name="Genome Biol.">
        <title>Annotation of the Drosophila melanogaster euchromatic genome: a systematic review.</title>
        <authorList>
            <person name="Misra S."/>
            <person name="Crosby M.A."/>
            <person name="Mungall C.J."/>
            <person name="Matthews B.B."/>
            <person name="Campbell K.S."/>
            <person name="Hradecky P."/>
            <person name="Huang Y."/>
            <person name="Kaminker J.S."/>
            <person name="Millburn G.H."/>
            <person name="Prochnik S.E."/>
            <person name="Smith C.D."/>
            <person name="Tupy J.L."/>
            <person name="Whitfield E.J."/>
            <person name="Bayraktaroglu L."/>
            <person name="Berman B.P."/>
            <person name="Bettencourt B.R."/>
            <person name="Celniker S.E."/>
            <person name="de Grey A.D.N.J."/>
            <person name="Drysdale R.A."/>
            <person name="Harris N.L."/>
            <person name="Richter J."/>
            <person name="Russo S."/>
            <person name="Schroeder A.J."/>
            <person name="Shu S.Q."/>
            <person name="Stapleton M."/>
            <person name="Yamada C."/>
            <person name="Ashburner M."/>
            <person name="Gelbart W.M."/>
            <person name="Rubin G.M."/>
            <person name="Lewis S.E."/>
        </authorList>
    </citation>
    <scope>GENOME REANNOTATION</scope>
    <source>
        <strain>Berkeley</strain>
    </source>
</reference>
<reference key="5">
    <citation type="journal article" date="2002" name="Genome Biol.">
        <title>A Drosophila full-length cDNA resource.</title>
        <authorList>
            <person name="Stapleton M."/>
            <person name="Carlson J.W."/>
            <person name="Brokstein P."/>
            <person name="Yu C."/>
            <person name="Champe M."/>
            <person name="George R.A."/>
            <person name="Guarin H."/>
            <person name="Kronmiller B."/>
            <person name="Pacleb J.M."/>
            <person name="Park S."/>
            <person name="Wan K.H."/>
            <person name="Rubin G.M."/>
            <person name="Celniker S.E."/>
        </authorList>
    </citation>
    <scope>NUCLEOTIDE SEQUENCE [LARGE SCALE MRNA]</scope>
    <source>
        <strain>Berkeley</strain>
        <tissue>Ovary</tissue>
    </source>
</reference>
<reference key="6">
    <citation type="journal article" date="2007" name="Mol. Biosyst.">
        <title>An integrated chemical, mass spectrometric and computational strategy for (quantitative) phosphoproteomics: application to Drosophila melanogaster Kc167 cells.</title>
        <authorList>
            <person name="Bodenmiller B."/>
            <person name="Mueller L.N."/>
            <person name="Pedrioli P.G.A."/>
            <person name="Pflieger D."/>
            <person name="Juenger M.A."/>
            <person name="Eng J.K."/>
            <person name="Aebersold R."/>
            <person name="Tao W.A."/>
        </authorList>
    </citation>
    <scope>PHOSPHORYLATION [LARGE SCALE ANALYSIS] AT SER-75</scope>
    <scope>IDENTIFICATION BY MASS SPECTROMETRY</scope>
</reference>
<reference key="7">
    <citation type="journal article" date="2008" name="J. Proteome Res.">
        <title>Phosphoproteome analysis of Drosophila melanogaster embryos.</title>
        <authorList>
            <person name="Zhai B."/>
            <person name="Villen J."/>
            <person name="Beausoleil S.A."/>
            <person name="Mintseris J."/>
            <person name="Gygi S.P."/>
        </authorList>
    </citation>
    <scope>PHOSPHORYLATION [LARGE SCALE ANALYSIS] AT SER-58</scope>
    <scope>IDENTIFICATION BY MASS SPECTROMETRY</scope>
    <source>
        <tissue>Embryo</tissue>
    </source>
</reference>
<accession>P02518</accession>
<accession>Q9VSX6</accession>
<evidence type="ECO:0000255" key="1">
    <source>
        <dbReference type="PROSITE-ProRule" id="PRU00285"/>
    </source>
</evidence>
<evidence type="ECO:0000256" key="2">
    <source>
        <dbReference type="SAM" id="MobiDB-lite"/>
    </source>
</evidence>
<evidence type="ECO:0000269" key="3">
    <source>
    </source>
</evidence>
<evidence type="ECO:0000269" key="4">
    <source>
    </source>
</evidence>
<evidence type="ECO:0000305" key="5"/>
<comment type="similarity">
    <text evidence="1">Belongs to the small heat shock protein (HSP20) family.</text>
</comment>
<protein>
    <recommendedName>
        <fullName>Heat shock protein 27</fullName>
    </recommendedName>
</protein>
<organism>
    <name type="scientific">Drosophila melanogaster</name>
    <name type="common">Fruit fly</name>
    <dbReference type="NCBI Taxonomy" id="7227"/>
    <lineage>
        <taxon>Eukaryota</taxon>
        <taxon>Metazoa</taxon>
        <taxon>Ecdysozoa</taxon>
        <taxon>Arthropoda</taxon>
        <taxon>Hexapoda</taxon>
        <taxon>Insecta</taxon>
        <taxon>Pterygota</taxon>
        <taxon>Neoptera</taxon>
        <taxon>Endopterygota</taxon>
        <taxon>Diptera</taxon>
        <taxon>Brachycera</taxon>
        <taxon>Muscomorpha</taxon>
        <taxon>Ephydroidea</taxon>
        <taxon>Drosophilidae</taxon>
        <taxon>Drosophila</taxon>
        <taxon>Sophophora</taxon>
    </lineage>
</organism>
<sequence>MSIIPLLHLARELDHDYRTDWGHLLEDDFGFGVHAHDLFHPRRLLLPNTLGLGRRRYSPYERSHGHHNQMSRRASGGPNALLPAVGKDGFQVCMDVSQFKPNELTVKVVDNTVVVEGKHEEREDGHGMIQRHFVRKYTLPKGFDPNEVVSTVSSDGVLTLKAPPPPSKEQAKSERIVQIQQTGPAHLSVKAPAPEAGDGKAENGSGEKMETSK</sequence>